<reference key="1">
    <citation type="journal article" date="1996" name="Genomics">
        <title>Isolation and chromosomal mapping of a mouse homolog of the Batten disease gene CLN3.</title>
        <authorList>
            <person name="Lee R.L."/>
            <person name="Johnson K.R."/>
            <person name="Lerner T.J."/>
        </authorList>
    </citation>
    <scope>NUCLEOTIDE SEQUENCE [MRNA]</scope>
    <source>
        <tissue>Teratocarcinoma</tissue>
    </source>
</reference>
<reference key="2">
    <citation type="journal article" date="1997" name="Neuropediatrics">
        <title>Cross-species homology of the CLN3 gene.</title>
        <authorList>
            <person name="Taschner P.E.M."/>
            <person name="de Vos N."/>
            <person name="Breuning M.H."/>
        </authorList>
    </citation>
    <scope>NUCLEOTIDE SEQUENCE [MRNA]</scope>
    <source>
        <strain>BALB/cJ</strain>
        <tissue>Liver</tissue>
    </source>
</reference>
<reference key="3">
    <citation type="submission" date="1997-03" db="EMBL/GenBank/DDBJ databases">
        <title>Immunochemical localization of the Batten disease (CLN3) protein in retina.</title>
        <authorList>
            <person name="Katz M.L."/>
            <person name="Gao C.-L."/>
            <person name="Prabhakaram M."/>
            <person name="Shibuya H."/>
            <person name="Liu P.-C."/>
            <person name="Johnson G.S."/>
        </authorList>
    </citation>
    <scope>NUCLEOTIDE SEQUENCE [MRNA]</scope>
    <source>
        <strain>C57BL/6J</strain>
    </source>
</reference>
<reference key="4">
    <citation type="journal article" date="2004" name="Genome Res.">
        <title>The status, quality, and expansion of the NIH full-length cDNA project: the Mammalian Gene Collection (MGC).</title>
        <authorList>
            <consortium name="The MGC Project Team"/>
        </authorList>
    </citation>
    <scope>NUCLEOTIDE SEQUENCE [LARGE SCALE MRNA]</scope>
    <source>
        <strain>FVB/N</strain>
        <tissue>Colon</tissue>
        <tissue>Mammary tumor</tissue>
    </source>
</reference>
<reference key="5">
    <citation type="journal article" date="1999" name="J. Neurosci. Res.">
        <title>A mouse gene knockout model for juvenile ceroid-lipofuscinosis (Batten disease).</title>
        <authorList>
            <person name="Katz M.L."/>
            <person name="Shibuya H."/>
            <person name="Liu P.C."/>
            <person name="Kaur S."/>
            <person name="Gao C.L."/>
            <person name="Johnson G.S."/>
        </authorList>
    </citation>
    <scope>DISRUPTION PHENOTYPE</scope>
</reference>
<reference key="6">
    <citation type="journal article" date="1999" name="Mol. Genet. Metab.">
        <title>CLN3 defines a novel antiapoptotic pathway operative in neurodegeneration and mediated by ceramide.</title>
        <authorList>
            <person name="Puranam K.L."/>
            <person name="Guo W.X."/>
            <person name="Qian W.H."/>
            <person name="Nikbakht K."/>
            <person name="Boustany R.M."/>
        </authorList>
    </citation>
    <scope>FUNCTION</scope>
</reference>
<reference key="7">
    <citation type="journal article" date="1999" name="Neurobiol. Dis.">
        <title>Targeted disruption of the Cln3 gene provides a mouse model for Batten disease. The Batten Mouse Model Consortium [corrected].</title>
        <authorList>
            <person name="Mitchison H.M."/>
            <person name="Bernard D.J."/>
            <person name="Greene N.D."/>
            <person name="Cooper J.D."/>
            <person name="Junaid M.A."/>
            <person name="Pullarkat R.K."/>
            <person name="de Vos N."/>
            <person name="Breuning M.H."/>
            <person name="Owens J.W."/>
            <person name="Mobley W.C."/>
            <person name="Gardiner R.M."/>
            <person name="Lake B.D."/>
            <person name="Taschner P.E."/>
            <person name="Nussbaum R.L."/>
        </authorList>
    </citation>
    <scope>DISRUPTION PHENOTYPE</scope>
</reference>
<reference key="8">
    <citation type="journal article" date="2001" name="Hum. Mol. Genet.">
        <title>CLN3 protein is targeted to neuronal synapses but excluded from synaptic vesicles: new clues to Batten disease.</title>
        <authorList>
            <person name="Luiro K."/>
            <person name="Kopra O."/>
            <person name="Lehtovirta M."/>
            <person name="Jalanko A."/>
        </authorList>
    </citation>
    <scope>TISSUE SPECIFICITY</scope>
    <scope>SUBCELLULAR LOCATION</scope>
    <scope>SUBUNIT</scope>
</reference>
<reference key="9">
    <citation type="journal article" date="2002" name="Hum. Mol. Genet.">
        <title>Cln3(Deltaex7/8) knock-in mice with the common JNCL mutation exhibit progressive neurologic disease that begins before birth.</title>
        <authorList>
            <person name="Cotman S.L."/>
            <person name="Vrbanac V."/>
            <person name="Lebel L.A."/>
            <person name="Lee R.L."/>
            <person name="Johnson K.A."/>
            <person name="Donahue L.R."/>
            <person name="Teed A.M."/>
            <person name="Antonellis K."/>
            <person name="Bronson R.T."/>
            <person name="Lerner T.J."/>
            <person name="MacDonald M.E."/>
        </authorList>
    </citation>
    <scope>DISRUPTION PHENOTYPE</scope>
</reference>
<reference key="10">
    <citation type="journal article" date="2004" name="BMC Neurosci.">
        <title>Membrane trafficking and mitochondrial abnormalities precede subunit c deposition in a cerebellar cell model of juvenile neuronal ceroid lipofuscinosis.</title>
        <authorList>
            <person name="Fossale E."/>
            <person name="Wolf P."/>
            <person name="Espinola J.A."/>
            <person name="Lubicz-Nawrocka T."/>
            <person name="Teed A.M."/>
            <person name="Gao H."/>
            <person name="Rigamonti D."/>
            <person name="Cattaneo E."/>
            <person name="MacDonald M.E."/>
            <person name="Cotman S.L."/>
        </authorList>
    </citation>
    <scope>FUNCTION</scope>
    <scope>SUBCELLULAR LOCATION</scope>
</reference>
<reference key="11">
    <citation type="journal article" date="2006" name="J. Biol. Chem.">
        <title>Autophagy is disrupted in a knock-in mouse model of juvenile neuronal ceroid lipofuscinosis.</title>
        <authorList>
            <person name="Cao Y."/>
            <person name="Espinola J.A."/>
            <person name="Fossale E."/>
            <person name="Massey A.C."/>
            <person name="Cuervo A.M."/>
            <person name="MacDonald M.E."/>
            <person name="Cotman S.L."/>
        </authorList>
    </citation>
    <scope>SUBCELLULAR LOCATION</scope>
</reference>
<reference key="12">
    <citation type="journal article" date="2007" name="Hum. Mol. Genet.">
        <title>Neuronal vulnerability of CLN3 deletion to calcium-induced cytotoxicity is mediated by calsenilin.</title>
        <authorList>
            <person name="Chang J.W."/>
            <person name="Choi H."/>
            <person name="Kim H.J."/>
            <person name="Jo D.G."/>
            <person name="Jeon Y.J."/>
            <person name="Noh J.Y."/>
            <person name="Park W.J."/>
            <person name="Jung Y.K."/>
        </authorList>
    </citation>
    <scope>INTERACTION WITH KCNIP3</scope>
</reference>
<reference key="13">
    <citation type="journal article" date="2007" name="J. Neurosci.">
        <title>A knock-in reporter model of Batten disease.</title>
        <authorList>
            <person name="Eliason S.L."/>
            <person name="Stein C.S."/>
            <person name="Mao Q."/>
            <person name="Tecedor L."/>
            <person name="Ding S.L."/>
            <person name="Gaines D.M."/>
            <person name="Davidson B.L."/>
        </authorList>
    </citation>
    <scope>DISRUPTION PHENOTYPE</scope>
</reference>
<reference key="14">
    <citation type="journal article" date="2008" name="Exp. Cell Res.">
        <title>Novel interactions of CLN3 protein link Batten disease to dysregulation of fodrin-Na+, K+ ATPase complex.</title>
        <authorList>
            <person name="Uusi-Rauva K."/>
            <person name="Luiro K."/>
            <person name="Tanhuanpaeae K."/>
            <person name="Kopra O."/>
            <person name="Martin-Vasallo P."/>
            <person name="Kyttaelae A."/>
            <person name="Jalanko A."/>
        </authorList>
    </citation>
    <scope>FUNCTION</scope>
</reference>
<reference key="15">
    <citation type="journal article" date="2008" name="Neurobiol. Dis.">
        <title>Phenotypic characterization of a mouse model of juvenile neuronal ceroid lipofuscinosis.</title>
        <authorList>
            <person name="Katz M.L."/>
            <person name="Johnson G.S."/>
            <person name="Tullis G.E."/>
            <person name="Lei B."/>
        </authorList>
    </citation>
    <scope>DISRUPTION PHENOTYPE</scope>
</reference>
<reference key="16">
    <citation type="journal article" date="2009" name="BMC Cell Biol.">
        <title>Novel interactions of CLN5 support molecular networking between neuronal ceroid lipofuscinosis proteins.</title>
        <authorList>
            <person name="Lyly A."/>
            <person name="von Schantz C."/>
            <person name="Heine C."/>
            <person name="Schmiedt M.L."/>
            <person name="Sipilae T."/>
            <person name="Jalanko A."/>
            <person name="Kyttaelae A."/>
        </authorList>
    </citation>
    <scope>INTERACTION WITH CLN5</scope>
    <scope>SUBCELLULAR LOCATION</scope>
</reference>
<reference key="17">
    <citation type="journal article" date="2009" name="Immunity">
        <title>The phagosomal proteome in interferon-gamma-activated macrophages.</title>
        <authorList>
            <person name="Trost M."/>
            <person name="English L."/>
            <person name="Lemieux S."/>
            <person name="Courcelles M."/>
            <person name="Desjardins M."/>
            <person name="Thibault P."/>
        </authorList>
    </citation>
    <scope>PHOSPHORYLATION [LARGE SCALE ANALYSIS] AT SER-14</scope>
    <scope>IDENTIFICATION BY MASS SPECTROMETRY [LARGE SCALE ANALYSIS]</scope>
</reference>
<reference key="18">
    <citation type="journal article" date="2009" name="Neuropathol. Appl. Neurobiol.">
        <title>Altered arginine metabolism in the central nervous system (CNS) of the Cln3-/- mouse model of juvenile Batten disease.</title>
        <authorList>
            <person name="Chan C.H."/>
            <person name="Ramirez-Montealegre D."/>
            <person name="Pearce D.A."/>
        </authorList>
    </citation>
    <scope>FUNCTION</scope>
</reference>
<reference key="19">
    <citation type="journal article" date="2010" name="Am. J. Physiol.">
        <title>Osmoregulation of ceroid neuronal lipofuscinosis type 3 in the renal medulla.</title>
        <authorList>
            <person name="Stein C.S."/>
            <person name="Yancey P.H."/>
            <person name="Martins I."/>
            <person name="Sigmund R.D."/>
            <person name="Stokes J.B."/>
            <person name="Davidson B.L."/>
        </authorList>
    </citation>
    <scope>INDUCTION</scope>
    <scope>FUNCTION</scope>
</reference>
<reference key="20">
    <citation type="journal article" date="2010" name="Cell">
        <title>A tissue-specific atlas of mouse protein phosphorylation and expression.</title>
        <authorList>
            <person name="Huttlin E.L."/>
            <person name="Jedrychowski M.P."/>
            <person name="Elias J.E."/>
            <person name="Goswami T."/>
            <person name="Rad R."/>
            <person name="Beausoleil S.A."/>
            <person name="Villen J."/>
            <person name="Haas W."/>
            <person name="Sowa M.E."/>
            <person name="Gygi S.P."/>
        </authorList>
    </citation>
    <scope>IDENTIFICATION BY MASS SPECTROMETRY [LARGE SCALE ANALYSIS]</scope>
    <source>
        <tissue>Kidney</tissue>
    </source>
</reference>
<reference key="21">
    <citation type="journal article" date="2013" name="J. Neurosci.">
        <title>CLN3 loss disturbs membrane microdomain properties and protein transport in brain endothelial cells.</title>
        <authorList>
            <person name="Tecedor L."/>
            <person name="Stein C.S."/>
            <person name="Schultz M.L."/>
            <person name="Farwanah H."/>
            <person name="Sandhoff K."/>
            <person name="Davidson B.L."/>
        </authorList>
    </citation>
    <scope>FUNCTION</scope>
    <scope>SUBCELLULAR LOCATION</scope>
</reference>
<reference key="22">
    <citation type="journal article" date="2014" name="PLoS ONE">
        <title>CLN3 deficient cells display defects in the ARF1-Cdc42 pathway and actin-dependent events.</title>
        <authorList>
            <person name="Schultz M.L."/>
            <person name="Tecedor L."/>
            <person name="Stein C.S."/>
            <person name="Stamnes M.A."/>
            <person name="Davidson B.L."/>
        </authorList>
    </citation>
    <scope>FUNCTION</scope>
</reference>
<reference key="23">
    <citation type="journal article" date="2015" name="Hum. Mol. Genet.">
        <title>Photoreceptor phagosome processing defects and disturbed autophagy in retinal pigment epithelium of Cln3Deltaex1-6 mice modelling juvenile neuronal ceroid lipofuscinosis (Batten disease).</title>
        <authorList>
            <person name="Wavre-Shapton S.T."/>
            <person name="Calvi A.A."/>
            <person name="Turmaine M."/>
            <person name="Seabra M.C."/>
            <person name="Cutler D.F."/>
            <person name="Futter C.E."/>
            <person name="Mitchison H.M."/>
        </authorList>
    </citation>
    <scope>FUNCTION</scope>
</reference>
<reference key="24">
    <citation type="journal article" date="2015" name="J. Biol. Chem.">
        <title>Unbiased Cell-based Screening in a Neuronal Cell Model of Batten Disease Highlights an Interaction between Ca2+ Homeostasis, Autophagy, and CLN3 Protein Function.</title>
        <authorList>
            <person name="Chandrachud U."/>
            <person name="Walker M.W."/>
            <person name="Simas A.M."/>
            <person name="Heetveld S."/>
            <person name="Petcherski A."/>
            <person name="Klein M."/>
            <person name="Oh H."/>
            <person name="Wolf P."/>
            <person name="Zhao W.N."/>
            <person name="Norton S."/>
            <person name="Haggarty S.J."/>
            <person name="Lloyd-Evans E."/>
            <person name="Cotman S.L."/>
        </authorList>
    </citation>
    <scope>FUNCTION</scope>
</reference>
<reference key="25">
    <citation type="journal article" date="2017" name="Elife">
        <title>Defective synaptic transmission causes disease signs in a mouse model of juvenile neuronal ceroid lipofuscinosis.</title>
        <authorList>
            <person name="Gruenewald B."/>
            <person name="Lange M.D."/>
            <person name="Werner C."/>
            <person name="O'Leary A."/>
            <person name="Weishaupt A."/>
            <person name="Popp S."/>
            <person name="Pearce D.A."/>
            <person name="Wiendl H."/>
            <person name="Reif A."/>
            <person name="Pape H.C."/>
            <person name="Toyka K.V."/>
            <person name="Sommer C."/>
            <person name="Geis C."/>
        </authorList>
    </citation>
    <scope>FUNCTION</scope>
</reference>
<reference key="26">
    <citation type="journal article" date="2018" name="ENeuro">
        <title>Altered Cerebellar Short-Term Plasticity but No Change in Postsynaptic AMPA-Type Glutamate Receptors in a Mouse Model of Juvenile Batten Disease.</title>
        <authorList>
            <person name="Studniarczyk D."/>
            <person name="Needham E.L."/>
            <person name="Mitchison H.M."/>
            <person name="Farrant M."/>
            <person name="Cull-Candy S.G."/>
        </authorList>
    </citation>
    <scope>FUNCTION</scope>
</reference>
<proteinExistence type="evidence at protein level"/>
<comment type="function">
    <text evidence="1 4 9 10 12 14 15 17 18 19 20 21 22 23">Mediates microtubule-dependent, anterograde transport connecting the Golgi network, endosomes, autophagosomes, lysosomes and plasma membrane, and participates in several cellular processes such as regulation of lysosomal pH, lysosome protein degradation, receptor-mediated endocytosis, autophagy, transport of proteins and lipids from the TGN, apoptosis and synaptic transmission (PubMed:10191118, PubMed:15588329, PubMed:16714284, PubMed:17855597, PubMed:24227717, PubMed:25878248, PubMed:26450516, PubMed:29780879). Facilitates the proteins transport from trans-Golgi network (TGN)-to other membrane compartments such as transport of microdomain-associated proteins to the plasma membrane, IGF2R transport to the lysosome where it regulates the CTSD release leading to regulation of CTSD maturation and thereby APP intracellular processing (PubMed:24227717). Moreover regulates CTSD activity in response to osmotic stress (By similarity). Also binds galactosylceramide and transports it from the trans Golgi to the rafts, which may have immediate and downstream effects on cell survival by modulating ceramide synthesis (PubMed:10191118). At the plasma membrane, regulates actin-dependent events including filopodia formation, cell migration, and pinocytosis through ARF1-CDC42 pathway and also the cytoskeleton organization through interaction with MYH10 and fodrin leading to the regulation of the plasma membrane association of Na+, K+ ATPase complex (PubMed:18621045, PubMed:24792215). Regulates synaptic transmission in the amygdala, hippocampus, and cerebellum through regulation of synaptic vesicles density and their proximity to active zones leading to modulation of short-term plasticity and age-dependent anxious behavior, learning and memory (PubMed:29135436, PubMed:29780879). Regulates autophagic vacuoles (AVs) maturation by modulating the trafficking between endocytic and autophagolysosomal/lysosomal compartments, which involves vesicle fusion leading to regulation of degradation process (PubMed:16714284, PubMed:25878248, PubMed:26450516). Also participates in cellular homeostasis of compounds such as, water, ions, amino acids, proteins and lipids in several tissue namely in brain and kidney through regulation of their transport and synthesis (PubMed:19284480, PubMed:20219947, PubMed:25878248).</text>
</comment>
<comment type="subunit">
    <text evidence="1 7 11 16">Homooligomer (PubMed:11590129). Interacts with DCTN1, KIF3A, RAB7A and RILP (By similarity). Interacts with CLN5 (PubMed:19941651). Interacts with KCNIP3 (PubMed:17189291).</text>
</comment>
<comment type="subcellular location">
    <subcellularLocation>
        <location evidence="9">Lysosome membrane</location>
        <topology evidence="2">Multi-pass membrane protein</topology>
    </subcellularLocation>
    <subcellularLocation>
        <location evidence="1">Late endosome</location>
    </subcellularLocation>
    <subcellularLocation>
        <location evidence="7 10 16">Lysosome</location>
    </subcellularLocation>
    <subcellularLocation>
        <location evidence="18">Membrane raft</location>
    </subcellularLocation>
    <subcellularLocation>
        <location evidence="18">Golgi apparatus</location>
        <location evidence="18">trans-Golgi network</location>
    </subcellularLocation>
    <subcellularLocation>
        <location evidence="7">Synapse</location>
        <location evidence="7">Synaptosome</location>
    </subcellularLocation>
    <subcellularLocation>
        <location evidence="9">Early endosome membrane</location>
    </subcellularLocation>
    <subcellularLocation>
        <location evidence="9">Late endosome membrane</location>
    </subcellularLocation>
    <subcellularLocation>
        <location evidence="10">Cytoplasmic vesicle</location>
        <location evidence="10">Autophagosome</location>
    </subcellularLocation>
    <text evidence="7">Excluded from the synaptic vesicles.</text>
</comment>
<comment type="tissue specificity">
    <text evidence="7">Expressed throughout the brain, such as, in the cerebral cortex, hippocampus, cerebellum and several different cerebral nuclei (at protein level). In the cerebral cortex, expressed in all cortical layers. In the hippocampus, expressed in the granule cells in the dentate gyrus and the pyramidal cells of the hippocampus proper. In the cerebellum expressed in the granular and molecular layers, and in the Purkinje cell layer.</text>
</comment>
<comment type="induction">
    <text evidence="17">Expression is osmoregulated in renal medullary cells.</text>
</comment>
<comment type="PTM">
    <text evidence="1">Highly glycosylated.</text>
</comment>
<comment type="PTM">
    <text evidence="1">Farnesylation is important for trafficking to lysosomes.</text>
</comment>
<comment type="disruption phenotype">
    <text evidence="5 6 8 12 13">Embryos are viable and fertile and by 12 months of age do not exhibit obvious clinical signs but have significantly shortened life spans (PubMed:10527801, PubMed:17962032). Mice show elevation of lysosomal enzymes in brain and accumulation of autofluorescent storage material in neurons, retina and other cell types that increases with age (PubMed:10440905, PubMed:10527801, PubMed:17855597, PubMed:17962032). They also show neuropathological abnormalities with loss of certain cortical interneurons and hypertrophy of many interneuron populations in the hippocampus (PubMed:10527801). Moreover display progressive neurological deficits, including impaired motor function, decreased overall activity, acquisition of resting tremors, and increased susceptibility to pentilentetrazole-induced seizures (PubMed:17855597). Mice exhibit progressively impaired inner retinal function, altered pupillary light reflexes, losses of inner retinal neurons, and reduced brain mass. Mice show behavioral changes including reduced spontaneous activity levels and impaired learning and memory (PubMed:17962032). Cln3 hypomorphic mutant mice, harboring the ~1 kb common juvenile neuronal ceroid lipofuscinosis (JNCL) mutation, express multiple Cln3 mRNA splice variants and mutant battenin protein. Homozygous Cln3 mice exhibit a progressive JNCL-like disease, with perinatal onset of subunit c of ATP synthasedeposition in many cell types and later onset of neuronal dysfunction and behavioral deficits (PubMed:12374761). Can serve as an animal model for studying neuronal ceroid lipofuscinosis 3/Batten disease (PubMed:10440905, PubMed:10527801, PubMed:12374761, PubMed:17962032).</text>
</comment>
<comment type="similarity">
    <text evidence="24">Belongs to the battenin family.</text>
</comment>
<gene>
    <name evidence="25" type="primary">Cln3</name>
</gene>
<organism>
    <name type="scientific">Mus musculus</name>
    <name type="common">Mouse</name>
    <dbReference type="NCBI Taxonomy" id="10090"/>
    <lineage>
        <taxon>Eukaryota</taxon>
        <taxon>Metazoa</taxon>
        <taxon>Chordata</taxon>
        <taxon>Craniata</taxon>
        <taxon>Vertebrata</taxon>
        <taxon>Euteleostomi</taxon>
        <taxon>Mammalia</taxon>
        <taxon>Eutheria</taxon>
        <taxon>Euarchontoglires</taxon>
        <taxon>Glires</taxon>
        <taxon>Rodentia</taxon>
        <taxon>Myomorpha</taxon>
        <taxon>Muroidea</taxon>
        <taxon>Muridae</taxon>
        <taxon>Murinae</taxon>
        <taxon>Mus</taxon>
        <taxon>Mus</taxon>
    </lineage>
</organism>
<sequence>MGSSAGSWRRLEDSEREETDSEPQAPRLDSRSVLWKNAVGFWILGLCNNFSYVVMLSAAHDILKQEQASGNQSHVEPGPTPTPHNSSSRFDCNSISTAAVLLADILPTLVIKLLAPLGLHLLPYSPRVLVSGVCSAGSFVLVAFSQSVGLSLCGVVLASISSGLGEVTFLSLTAFYPSAVISWWSSGTGGAGLLGSLSYLGLTQAGLSPQHTLLSMLGIPVLLLASYFLLLTSPEPLDPGGENEAETAARQPLIGTETPESKPGASWDLSLQERWTVFKGLLWYIIPLVLVYFAEYFINQGLFELLFFRNTSLSHAQQYRWYQMLYQAGVFASRSSLQCCRIRFTWVLALLQCLNLALLLADVCLNFLPSIYLIFIIILYEGLLGGAAYVNTFHNIALETSDKHREFAMEAACISDTLGISLSGVLALPLHDFLCHLP</sequence>
<dbReference type="EMBL" id="U47106">
    <property type="protein sequence ID" value="AAC52957.1"/>
    <property type="molecule type" value="mRNA"/>
</dbReference>
<dbReference type="EMBL" id="U68064">
    <property type="protein sequence ID" value="AAB07595.1"/>
    <property type="molecule type" value="mRNA"/>
</dbReference>
<dbReference type="EMBL" id="U92811">
    <property type="protein sequence ID" value="AAB69983.1"/>
    <property type="molecule type" value="mRNA"/>
</dbReference>
<dbReference type="EMBL" id="BC058753">
    <property type="protein sequence ID" value="AAH58753.1"/>
    <property type="molecule type" value="mRNA"/>
</dbReference>
<dbReference type="EMBL" id="BC080759">
    <property type="protein sequence ID" value="AAH80759.1"/>
    <property type="molecule type" value="mRNA"/>
</dbReference>
<dbReference type="CCDS" id="CCDS21833.1"/>
<dbReference type="RefSeq" id="NP_001139783.1">
    <property type="nucleotide sequence ID" value="NM_001146311.3"/>
</dbReference>
<dbReference type="RefSeq" id="NP_001389644.1">
    <property type="nucleotide sequence ID" value="NM_001402715.1"/>
</dbReference>
<dbReference type="RefSeq" id="NP_001389645.1">
    <property type="nucleotide sequence ID" value="NM_001402716.1"/>
</dbReference>
<dbReference type="RefSeq" id="NP_001389646.1">
    <property type="nucleotide sequence ID" value="NM_001402717.1"/>
</dbReference>
<dbReference type="RefSeq" id="NP_001389647.1">
    <property type="nucleotide sequence ID" value="NM_001402718.1"/>
</dbReference>
<dbReference type="RefSeq" id="NP_001389648.1">
    <property type="nucleotide sequence ID" value="NM_001402719.1"/>
</dbReference>
<dbReference type="RefSeq" id="NP_001389649.1">
    <property type="nucleotide sequence ID" value="NM_001402720.1"/>
</dbReference>
<dbReference type="RefSeq" id="NP_034037.3">
    <property type="nucleotide sequence ID" value="NM_009907.4"/>
</dbReference>
<dbReference type="RefSeq" id="XP_006507351.1">
    <property type="nucleotide sequence ID" value="XM_006507288.3"/>
</dbReference>
<dbReference type="RefSeq" id="XP_006507352.1">
    <property type="nucleotide sequence ID" value="XM_006507289.2"/>
</dbReference>
<dbReference type="RefSeq" id="XP_006507353.1">
    <property type="nucleotide sequence ID" value="XM_006507290.1"/>
</dbReference>
<dbReference type="RefSeq" id="XP_006507355.1">
    <property type="nucleotide sequence ID" value="XM_006507292.1"/>
</dbReference>
<dbReference type="RefSeq" id="XP_006507356.1">
    <property type="nucleotide sequence ID" value="XM_006507293.3"/>
</dbReference>
<dbReference type="RefSeq" id="XP_017177452.1">
    <property type="nucleotide sequence ID" value="XM_017321963.1"/>
</dbReference>
<dbReference type="RefSeq" id="XP_036008513.1">
    <property type="nucleotide sequence ID" value="XM_036152620.1"/>
</dbReference>
<dbReference type="RefSeq" id="XP_036008514.1">
    <property type="nucleotide sequence ID" value="XM_036152621.1"/>
</dbReference>
<dbReference type="RefSeq" id="XP_036008515.1">
    <property type="nucleotide sequence ID" value="XM_036152622.1"/>
</dbReference>
<dbReference type="RefSeq" id="XP_036008516.1">
    <property type="nucleotide sequence ID" value="XM_036152623.1"/>
</dbReference>
<dbReference type="CORUM" id="Q61124"/>
<dbReference type="FunCoup" id="Q61124">
    <property type="interactions" value="949"/>
</dbReference>
<dbReference type="STRING" id="10090.ENSMUSP00000081636"/>
<dbReference type="TCDB" id="2.A.57.5.1">
    <property type="family name" value="the equilibrative nucleoside transporter (ent) family"/>
</dbReference>
<dbReference type="GlyCosmos" id="Q61124">
    <property type="glycosylation" value="3 sites, No reported glycans"/>
</dbReference>
<dbReference type="GlyGen" id="Q61124">
    <property type="glycosylation" value="5 sites"/>
</dbReference>
<dbReference type="iPTMnet" id="Q61124"/>
<dbReference type="PhosphoSitePlus" id="Q61124"/>
<dbReference type="SwissPalm" id="Q61124"/>
<dbReference type="jPOST" id="Q61124"/>
<dbReference type="PaxDb" id="10090-ENSMUSP00000081636"/>
<dbReference type="PeptideAtlas" id="Q61124"/>
<dbReference type="ProteomicsDB" id="283527"/>
<dbReference type="Antibodypedia" id="26372">
    <property type="antibodies" value="186 antibodies from 29 providers"/>
</dbReference>
<dbReference type="DNASU" id="12752"/>
<dbReference type="Ensembl" id="ENSMUST00000032962.11">
    <property type="protein sequence ID" value="ENSMUSP00000032962.5"/>
    <property type="gene ID" value="ENSMUSG00000030720.17"/>
</dbReference>
<dbReference type="Ensembl" id="ENSMUST00000084589.11">
    <property type="protein sequence ID" value="ENSMUSP00000081636.5"/>
    <property type="gene ID" value="ENSMUSG00000030720.17"/>
</dbReference>
<dbReference type="Ensembl" id="ENSMUST00000116269.9">
    <property type="protein sequence ID" value="ENSMUSP00000111973.3"/>
    <property type="gene ID" value="ENSMUSG00000030720.17"/>
</dbReference>
<dbReference type="GeneID" id="12752"/>
<dbReference type="KEGG" id="mmu:12752"/>
<dbReference type="UCSC" id="uc009jrx.2">
    <property type="organism name" value="mouse"/>
</dbReference>
<dbReference type="AGR" id="MGI:107537"/>
<dbReference type="CTD" id="1201"/>
<dbReference type="MGI" id="MGI:107537">
    <property type="gene designation" value="Cln3"/>
</dbReference>
<dbReference type="VEuPathDB" id="HostDB:ENSMUSG00000030720"/>
<dbReference type="eggNOG" id="KOG3880">
    <property type="taxonomic scope" value="Eukaryota"/>
</dbReference>
<dbReference type="GeneTree" id="ENSGT00390000003249"/>
<dbReference type="HOGENOM" id="CLU_029663_0_1_1"/>
<dbReference type="InParanoid" id="Q61124"/>
<dbReference type="OMA" id="WLCNWQV"/>
<dbReference type="OrthoDB" id="5965864at2759"/>
<dbReference type="PhylomeDB" id="Q61124"/>
<dbReference type="TreeFam" id="TF314055"/>
<dbReference type="Reactome" id="R-MMU-9845576">
    <property type="pathway name" value="Glycosphingolipid transport"/>
</dbReference>
<dbReference type="BioGRID-ORCS" id="12752">
    <property type="hits" value="1 hit in 79 CRISPR screens"/>
</dbReference>
<dbReference type="ChiTaRS" id="Cln3">
    <property type="organism name" value="mouse"/>
</dbReference>
<dbReference type="PRO" id="PR:Q61124"/>
<dbReference type="Proteomes" id="UP000000589">
    <property type="component" value="Chromosome 7"/>
</dbReference>
<dbReference type="RNAct" id="Q61124">
    <property type="molecule type" value="protein"/>
</dbReference>
<dbReference type="Bgee" id="ENSMUSG00000030720">
    <property type="expression patterns" value="Expressed in granulocyte and 237 other cell types or tissues"/>
</dbReference>
<dbReference type="ExpressionAtlas" id="Q61124">
    <property type="expression patterns" value="baseline and differential"/>
</dbReference>
<dbReference type="GO" id="GO:0044754">
    <property type="term" value="C:autolysosome"/>
    <property type="evidence" value="ECO:0000314"/>
    <property type="project" value="UniProtKB"/>
</dbReference>
<dbReference type="GO" id="GO:0005776">
    <property type="term" value="C:autophagosome"/>
    <property type="evidence" value="ECO:0000314"/>
    <property type="project" value="MGI"/>
</dbReference>
<dbReference type="GO" id="GO:0005901">
    <property type="term" value="C:caveola"/>
    <property type="evidence" value="ECO:0000250"/>
    <property type="project" value="UniProtKB"/>
</dbReference>
<dbReference type="GO" id="GO:0005737">
    <property type="term" value="C:cytoplasm"/>
    <property type="evidence" value="ECO:0000250"/>
    <property type="project" value="UniProtKB"/>
</dbReference>
<dbReference type="GO" id="GO:0031410">
    <property type="term" value="C:cytoplasmic vesicle"/>
    <property type="evidence" value="ECO:0000314"/>
    <property type="project" value="MGI"/>
</dbReference>
<dbReference type="GO" id="GO:0005829">
    <property type="term" value="C:cytosol"/>
    <property type="evidence" value="ECO:0007669"/>
    <property type="project" value="GOC"/>
</dbReference>
<dbReference type="GO" id="GO:0005769">
    <property type="term" value="C:early endosome"/>
    <property type="evidence" value="ECO:0000314"/>
    <property type="project" value="MGI"/>
</dbReference>
<dbReference type="GO" id="GO:0031901">
    <property type="term" value="C:early endosome membrane"/>
    <property type="evidence" value="ECO:0000250"/>
    <property type="project" value="UniProtKB"/>
</dbReference>
<dbReference type="GO" id="GO:0005783">
    <property type="term" value="C:endoplasmic reticulum"/>
    <property type="evidence" value="ECO:0000250"/>
    <property type="project" value="UniProtKB"/>
</dbReference>
<dbReference type="GO" id="GO:0005789">
    <property type="term" value="C:endoplasmic reticulum membrane"/>
    <property type="evidence" value="ECO:0000250"/>
    <property type="project" value="UniProtKB"/>
</dbReference>
<dbReference type="GO" id="GO:0005794">
    <property type="term" value="C:Golgi apparatus"/>
    <property type="evidence" value="ECO:0000250"/>
    <property type="project" value="UniProtKB"/>
</dbReference>
<dbReference type="GO" id="GO:0000139">
    <property type="term" value="C:Golgi membrane"/>
    <property type="evidence" value="ECO:0000250"/>
    <property type="project" value="UniProtKB"/>
</dbReference>
<dbReference type="GO" id="GO:0005795">
    <property type="term" value="C:Golgi stack"/>
    <property type="evidence" value="ECO:0000250"/>
    <property type="project" value="UniProtKB"/>
</dbReference>
<dbReference type="GO" id="GO:0005770">
    <property type="term" value="C:late endosome"/>
    <property type="evidence" value="ECO:0000314"/>
    <property type="project" value="MGI"/>
</dbReference>
<dbReference type="GO" id="GO:0031902">
    <property type="term" value="C:late endosome membrane"/>
    <property type="evidence" value="ECO:0007669"/>
    <property type="project" value="UniProtKB-SubCell"/>
</dbReference>
<dbReference type="GO" id="GO:0005765">
    <property type="term" value="C:lysosomal membrane"/>
    <property type="evidence" value="ECO:0000250"/>
    <property type="project" value="UniProtKB"/>
</dbReference>
<dbReference type="GO" id="GO:0005764">
    <property type="term" value="C:lysosome"/>
    <property type="evidence" value="ECO:0000314"/>
    <property type="project" value="UniProtKB"/>
</dbReference>
<dbReference type="GO" id="GO:0016020">
    <property type="term" value="C:membrane"/>
    <property type="evidence" value="ECO:0000250"/>
    <property type="project" value="UniProtKB"/>
</dbReference>
<dbReference type="GO" id="GO:0045121">
    <property type="term" value="C:membrane raft"/>
    <property type="evidence" value="ECO:0000314"/>
    <property type="project" value="UniProtKB"/>
</dbReference>
<dbReference type="GO" id="GO:0043005">
    <property type="term" value="C:neuron projection"/>
    <property type="evidence" value="ECO:0000314"/>
    <property type="project" value="UniProtKB"/>
</dbReference>
<dbReference type="GO" id="GO:0005634">
    <property type="term" value="C:nucleus"/>
    <property type="evidence" value="ECO:0000250"/>
    <property type="project" value="UniProtKB"/>
</dbReference>
<dbReference type="GO" id="GO:0005886">
    <property type="term" value="C:plasma membrane"/>
    <property type="evidence" value="ECO:0000250"/>
    <property type="project" value="UniProtKB"/>
</dbReference>
<dbReference type="GO" id="GO:0055037">
    <property type="term" value="C:recycling endosome"/>
    <property type="evidence" value="ECO:0000250"/>
    <property type="project" value="UniProtKB"/>
</dbReference>
<dbReference type="GO" id="GO:0008021">
    <property type="term" value="C:synaptic vesicle"/>
    <property type="evidence" value="ECO:0000250"/>
    <property type="project" value="UniProtKB"/>
</dbReference>
<dbReference type="GO" id="GO:0005802">
    <property type="term" value="C:trans-Golgi network"/>
    <property type="evidence" value="ECO:0000314"/>
    <property type="project" value="UniProtKB"/>
</dbReference>
<dbReference type="GO" id="GO:0048306">
    <property type="term" value="F:calcium-dependent protein binding"/>
    <property type="evidence" value="ECO:0000353"/>
    <property type="project" value="MGI"/>
</dbReference>
<dbReference type="GO" id="GO:0051861">
    <property type="term" value="F:glycolipid binding"/>
    <property type="evidence" value="ECO:0000250"/>
    <property type="project" value="UniProtKB"/>
</dbReference>
<dbReference type="GO" id="GO:0120146">
    <property type="term" value="F:sulfatide binding"/>
    <property type="evidence" value="ECO:0000250"/>
    <property type="project" value="UniProtKB"/>
</dbReference>
<dbReference type="GO" id="GO:0030036">
    <property type="term" value="P:actin cytoskeleton organization"/>
    <property type="evidence" value="ECO:0000315"/>
    <property type="project" value="MGI"/>
</dbReference>
<dbReference type="GO" id="GO:0001508">
    <property type="term" value="P:action potential"/>
    <property type="evidence" value="ECO:0000315"/>
    <property type="project" value="MGI"/>
</dbReference>
<dbReference type="GO" id="GO:0006865">
    <property type="term" value="P:amino acid transport"/>
    <property type="evidence" value="ECO:0000315"/>
    <property type="project" value="MGI"/>
</dbReference>
<dbReference type="GO" id="GO:0042987">
    <property type="term" value="P:amyloid precursor protein catabolic process"/>
    <property type="evidence" value="ECO:0000250"/>
    <property type="project" value="UniProtKB"/>
</dbReference>
<dbReference type="GO" id="GO:0008306">
    <property type="term" value="P:associative learning"/>
    <property type="evidence" value="ECO:0000315"/>
    <property type="project" value="MGI"/>
</dbReference>
<dbReference type="GO" id="GO:0097352">
    <property type="term" value="P:autophagosome maturation"/>
    <property type="evidence" value="ECO:0000315"/>
    <property type="project" value="MGI"/>
</dbReference>
<dbReference type="GO" id="GO:0061909">
    <property type="term" value="P:autophagosome-lysosome fusion"/>
    <property type="evidence" value="ECO:0000315"/>
    <property type="project" value="UniProtKB"/>
</dbReference>
<dbReference type="GO" id="GO:0043534">
    <property type="term" value="P:blood vessel endothelial cell migration"/>
    <property type="evidence" value="ECO:0000315"/>
    <property type="project" value="MGI"/>
</dbReference>
<dbReference type="GO" id="GO:0006897">
    <property type="term" value="P:endocytosis"/>
    <property type="evidence" value="ECO:0000315"/>
    <property type="project" value="MGI"/>
</dbReference>
<dbReference type="GO" id="GO:0051649">
    <property type="term" value="P:establishment of localization in cell"/>
    <property type="evidence" value="ECO:0000315"/>
    <property type="project" value="MGI"/>
</dbReference>
<dbReference type="GO" id="GO:0046474">
    <property type="term" value="P:glycerophospholipid biosynthetic process"/>
    <property type="evidence" value="ECO:0000250"/>
    <property type="project" value="UniProtKB"/>
</dbReference>
<dbReference type="GO" id="GO:0046836">
    <property type="term" value="P:glycolipid transport"/>
    <property type="evidence" value="ECO:0000250"/>
    <property type="project" value="UniProtKB"/>
</dbReference>
<dbReference type="GO" id="GO:0090160">
    <property type="term" value="P:Golgi to lysosome transport"/>
    <property type="evidence" value="ECO:0000250"/>
    <property type="project" value="UniProtKB"/>
</dbReference>
<dbReference type="GO" id="GO:0009992">
    <property type="term" value="P:intracellular water homeostasis"/>
    <property type="evidence" value="ECO:0000315"/>
    <property type="project" value="UniProtKB"/>
</dbReference>
<dbReference type="GO" id="GO:0035235">
    <property type="term" value="P:ionotropic glutamate receptor signaling pathway"/>
    <property type="evidence" value="ECO:0000315"/>
    <property type="project" value="MGI"/>
</dbReference>
<dbReference type="GO" id="GO:1903826">
    <property type="term" value="P:L-arginine transmembrane transport"/>
    <property type="evidence" value="ECO:0000250"/>
    <property type="project" value="UniProtKB"/>
</dbReference>
<dbReference type="GO" id="GO:0007611">
    <property type="term" value="P:learning or memory"/>
    <property type="evidence" value="ECO:0000315"/>
    <property type="project" value="UniProtKB"/>
</dbReference>
<dbReference type="GO" id="GO:0007042">
    <property type="term" value="P:lysosomal lumen acidification"/>
    <property type="evidence" value="ECO:0000250"/>
    <property type="project" value="UniProtKB"/>
</dbReference>
<dbReference type="GO" id="GO:0035752">
    <property type="term" value="P:lysosomal lumen pH elevation"/>
    <property type="evidence" value="ECO:0000250"/>
    <property type="project" value="UniProtKB"/>
</dbReference>
<dbReference type="GO" id="GO:1905146">
    <property type="term" value="P:lysosomal protein catabolic process"/>
    <property type="evidence" value="ECO:0000315"/>
    <property type="project" value="UniProtKB"/>
</dbReference>
<dbReference type="GO" id="GO:0007040">
    <property type="term" value="P:lysosome organization"/>
    <property type="evidence" value="ECO:0000315"/>
    <property type="project" value="MGI"/>
</dbReference>
<dbReference type="GO" id="GO:0016236">
    <property type="term" value="P:macroautophagy"/>
    <property type="evidence" value="ECO:0000315"/>
    <property type="project" value="MGI"/>
</dbReference>
<dbReference type="GO" id="GO:0061024">
    <property type="term" value="P:membrane organization"/>
    <property type="evidence" value="ECO:0000315"/>
    <property type="project" value="MGI"/>
</dbReference>
<dbReference type="GO" id="GO:0043066">
    <property type="term" value="P:negative regulation of apoptotic process"/>
    <property type="evidence" value="ECO:0000315"/>
    <property type="project" value="UniProtKB"/>
</dbReference>
<dbReference type="GO" id="GO:0043524">
    <property type="term" value="P:negative regulation of neuron apoptotic process"/>
    <property type="evidence" value="ECO:0000314"/>
    <property type="project" value="MGI"/>
</dbReference>
<dbReference type="GO" id="GO:0045861">
    <property type="term" value="P:negative regulation of proteolysis"/>
    <property type="evidence" value="ECO:0000315"/>
    <property type="project" value="MGI"/>
</dbReference>
<dbReference type="GO" id="GO:0050885">
    <property type="term" value="P:neuromuscular process controlling balance"/>
    <property type="evidence" value="ECO:0000315"/>
    <property type="project" value="MGI"/>
</dbReference>
<dbReference type="GO" id="GO:0090384">
    <property type="term" value="P:phagosome-lysosome docking"/>
    <property type="evidence" value="ECO:0000315"/>
    <property type="project" value="UniProtKB"/>
</dbReference>
<dbReference type="GO" id="GO:0090385">
    <property type="term" value="P:phagosome-lysosome fusion"/>
    <property type="evidence" value="ECO:0000315"/>
    <property type="project" value="UniProtKB"/>
</dbReference>
<dbReference type="GO" id="GO:0044857">
    <property type="term" value="P:plasma membrane raft organization"/>
    <property type="evidence" value="ECO:0000315"/>
    <property type="project" value="UniProtKB"/>
</dbReference>
<dbReference type="GO" id="GO:2001288">
    <property type="term" value="P:positive regulation of caveolin-mediated endocytosis"/>
    <property type="evidence" value="ECO:0000315"/>
    <property type="project" value="UniProtKB"/>
</dbReference>
<dbReference type="GO" id="GO:0042998">
    <property type="term" value="P:positive regulation of Golgi to plasma membrane protein transport"/>
    <property type="evidence" value="ECO:0000315"/>
    <property type="project" value="UniProtKB"/>
</dbReference>
<dbReference type="GO" id="GO:0048549">
    <property type="term" value="P:positive regulation of pinocytosis"/>
    <property type="evidence" value="ECO:0000315"/>
    <property type="project" value="UniProtKB"/>
</dbReference>
<dbReference type="GO" id="GO:0072657">
    <property type="term" value="P:protein localization to membrane"/>
    <property type="evidence" value="ECO:0000315"/>
    <property type="project" value="MGI"/>
</dbReference>
<dbReference type="GO" id="GO:0072659">
    <property type="term" value="P:protein localization to plasma membrane"/>
    <property type="evidence" value="ECO:0000315"/>
    <property type="project" value="MGI"/>
</dbReference>
<dbReference type="GO" id="GO:0016485">
    <property type="term" value="P:protein processing"/>
    <property type="evidence" value="ECO:0000315"/>
    <property type="project" value="MGI"/>
</dbReference>
<dbReference type="GO" id="GO:0006898">
    <property type="term" value="P:receptor-mediated endocytosis"/>
    <property type="evidence" value="ECO:0000250"/>
    <property type="project" value="UniProtKB"/>
</dbReference>
<dbReference type="GO" id="GO:1900079">
    <property type="term" value="P:regulation of arginine biosynthetic process"/>
    <property type="evidence" value="ECO:0000315"/>
    <property type="project" value="UniProtKB"/>
</dbReference>
<dbReference type="GO" id="GO:1901096">
    <property type="term" value="P:regulation of autophagosome maturation"/>
    <property type="evidence" value="ECO:0000315"/>
    <property type="project" value="UniProtKB"/>
</dbReference>
<dbReference type="GO" id="GO:0016243">
    <property type="term" value="P:regulation of autophagosome size"/>
    <property type="evidence" value="ECO:0000315"/>
    <property type="project" value="UniProtKB"/>
</dbReference>
<dbReference type="GO" id="GO:0010506">
    <property type="term" value="P:regulation of autophagy"/>
    <property type="evidence" value="ECO:0000315"/>
    <property type="project" value="UniProtKB"/>
</dbReference>
<dbReference type="GO" id="GO:0106049">
    <property type="term" value="P:regulation of cellular response to osmotic stress"/>
    <property type="evidence" value="ECO:0000250"/>
    <property type="project" value="UniProtKB"/>
</dbReference>
<dbReference type="GO" id="GO:0051493">
    <property type="term" value="P:regulation of cytoskeleton organization"/>
    <property type="evidence" value="ECO:0000250"/>
    <property type="project" value="UniProtKB"/>
</dbReference>
<dbReference type="GO" id="GO:0051480">
    <property type="term" value="P:regulation of cytosolic calcium ion concentration"/>
    <property type="evidence" value="ECO:0000314"/>
    <property type="project" value="MGI"/>
</dbReference>
<dbReference type="GO" id="GO:0010762">
    <property type="term" value="P:regulation of fibroblast migration"/>
    <property type="evidence" value="ECO:0000250"/>
    <property type="project" value="UniProtKB"/>
</dbReference>
<dbReference type="GO" id="GO:0051489">
    <property type="term" value="P:regulation of filopodium assembly"/>
    <property type="evidence" value="ECO:0000315"/>
    <property type="project" value="MGI"/>
</dbReference>
<dbReference type="GO" id="GO:0010468">
    <property type="term" value="P:regulation of gene expression"/>
    <property type="evidence" value="ECO:0000266"/>
    <property type="project" value="MGI"/>
</dbReference>
<dbReference type="GO" id="GO:1905244">
    <property type="term" value="P:regulation of modification of synaptic structure"/>
    <property type="evidence" value="ECO:0000315"/>
    <property type="project" value="UniProtKB"/>
</dbReference>
<dbReference type="GO" id="GO:1905162">
    <property type="term" value="P:regulation of phagosome maturation"/>
    <property type="evidence" value="ECO:0000315"/>
    <property type="project" value="UniProtKB"/>
</dbReference>
<dbReference type="GO" id="GO:1903076">
    <property type="term" value="P:regulation of protein localization to plasma membrane"/>
    <property type="evidence" value="ECO:0000315"/>
    <property type="project" value="UniProtKB"/>
</dbReference>
<dbReference type="GO" id="GO:0070613">
    <property type="term" value="P:regulation of protein processing"/>
    <property type="evidence" value="ECO:0000250"/>
    <property type="project" value="UniProtKB"/>
</dbReference>
<dbReference type="GO" id="GO:0048172">
    <property type="term" value="P:regulation of short-term neuronal synaptic plasticity"/>
    <property type="evidence" value="ECO:0000315"/>
    <property type="project" value="UniProtKB"/>
</dbReference>
<dbReference type="GO" id="GO:0032228">
    <property type="term" value="P:regulation of synaptic transmission, GABAergic"/>
    <property type="evidence" value="ECO:0000315"/>
    <property type="project" value="UniProtKB"/>
</dbReference>
<dbReference type="GO" id="GO:0051966">
    <property type="term" value="P:regulation of synaptic transmission, glutamatergic"/>
    <property type="evidence" value="ECO:0000315"/>
    <property type="project" value="UniProtKB"/>
</dbReference>
<dbReference type="GO" id="GO:0036359">
    <property type="term" value="P:renal potassium excretion"/>
    <property type="evidence" value="ECO:0000315"/>
    <property type="project" value="UniProtKB"/>
</dbReference>
<dbReference type="GO" id="GO:0047496">
    <property type="term" value="P:vesicle transport along microtubule"/>
    <property type="evidence" value="ECO:0000250"/>
    <property type="project" value="UniProtKB"/>
</dbReference>
<dbReference type="FunFam" id="1.20.1250.20:FF:000228">
    <property type="entry name" value="Battenin"/>
    <property type="match status" value="1"/>
</dbReference>
<dbReference type="InterPro" id="IPR003492">
    <property type="entry name" value="Battenin_disease_Cln3"/>
</dbReference>
<dbReference type="InterPro" id="IPR018460">
    <property type="entry name" value="Battenin_disease_Cln3_subgr"/>
</dbReference>
<dbReference type="InterPro" id="IPR036259">
    <property type="entry name" value="MFS_trans_sf"/>
</dbReference>
<dbReference type="PANTHER" id="PTHR10981">
    <property type="entry name" value="BATTENIN"/>
    <property type="match status" value="1"/>
</dbReference>
<dbReference type="PANTHER" id="PTHR10981:SF0">
    <property type="entry name" value="BATTENIN"/>
    <property type="match status" value="1"/>
</dbReference>
<dbReference type="Pfam" id="PF02487">
    <property type="entry name" value="CLN3"/>
    <property type="match status" value="1"/>
</dbReference>
<dbReference type="PIRSF" id="PIRSF015974">
    <property type="entry name" value="CLN3_BTN1"/>
    <property type="match status" value="1"/>
</dbReference>
<dbReference type="PRINTS" id="PR01315">
    <property type="entry name" value="BATTENIN"/>
</dbReference>
<dbReference type="SUPFAM" id="SSF103473">
    <property type="entry name" value="MFS general substrate transporter"/>
    <property type="match status" value="1"/>
</dbReference>
<keyword id="KW-0968">Cytoplasmic vesicle</keyword>
<keyword id="KW-0967">Endosome</keyword>
<keyword id="KW-0325">Glycoprotein</keyword>
<keyword id="KW-0333">Golgi apparatus</keyword>
<keyword id="KW-0449">Lipoprotein</keyword>
<keyword id="KW-0458">Lysosome</keyword>
<keyword id="KW-0472">Membrane</keyword>
<keyword id="KW-0488">Methylation</keyword>
<keyword id="KW-0597">Phosphoprotein</keyword>
<keyword id="KW-0636">Prenylation</keyword>
<keyword id="KW-1185">Reference proteome</keyword>
<keyword id="KW-0770">Synapse</keyword>
<keyword id="KW-0771">Synaptosome</keyword>
<keyword id="KW-0812">Transmembrane</keyword>
<keyword id="KW-1133">Transmembrane helix</keyword>
<keyword id="KW-0813">Transport</keyword>
<feature type="chain" id="PRO_0000089859" description="Battenin">
    <location>
        <begin position="1"/>
        <end position="435"/>
    </location>
</feature>
<feature type="propeptide" id="PRO_0000422292" description="Removed in mature form" evidence="1">
    <location>
        <begin position="436"/>
        <end position="438"/>
    </location>
</feature>
<feature type="topological domain" description="Cytoplasmic" evidence="1 2">
    <location>
        <begin position="1"/>
        <end position="37"/>
    </location>
</feature>
<feature type="transmembrane region" description="Helical" evidence="2">
    <location>
        <begin position="38"/>
        <end position="58"/>
    </location>
</feature>
<feature type="topological domain" description="Lumenal" evidence="2">
    <location>
        <begin position="59"/>
        <end position="127"/>
    </location>
</feature>
<feature type="transmembrane region" description="Helical" evidence="2">
    <location>
        <begin position="128"/>
        <end position="148"/>
    </location>
</feature>
<feature type="topological domain" description="Cytoplasmic" evidence="2">
    <location>
        <begin position="149"/>
        <end position="151"/>
    </location>
</feature>
<feature type="transmembrane region" description="Helical" evidence="2">
    <location>
        <begin position="152"/>
        <end position="172"/>
    </location>
</feature>
<feature type="topological domain" description="Lumenal" evidence="2">
    <location>
        <begin position="173"/>
        <end position="182"/>
    </location>
</feature>
<feature type="transmembrane region" description="Helical" evidence="2">
    <location>
        <begin position="183"/>
        <end position="203"/>
    </location>
</feature>
<feature type="topological domain" description="Cytoplasmic" evidence="1 2">
    <location>
        <begin position="204"/>
        <end position="277"/>
    </location>
</feature>
<feature type="transmembrane region" description="Helical" evidence="2">
    <location>
        <begin position="278"/>
        <end position="298"/>
    </location>
</feature>
<feature type="topological domain" description="Lumenal" evidence="1 2">
    <location>
        <begin position="299"/>
        <end position="346"/>
    </location>
</feature>
<feature type="transmembrane region" description="Helical" evidence="2">
    <location>
        <begin position="347"/>
        <end position="367"/>
    </location>
</feature>
<feature type="topological domain" description="Cytoplasmic" evidence="1 2">
    <location>
        <begin position="368"/>
        <end position="438"/>
    </location>
</feature>
<feature type="region of interest" description="Disordered" evidence="3">
    <location>
        <begin position="1"/>
        <end position="27"/>
    </location>
</feature>
<feature type="region of interest" description="Disordered" evidence="3">
    <location>
        <begin position="67"/>
        <end position="87"/>
    </location>
</feature>
<feature type="region of interest" description="Disordered" evidence="3">
    <location>
        <begin position="239"/>
        <end position="261"/>
    </location>
</feature>
<feature type="short sequence motif" description="Lysosomal targeting motif" evidence="1">
    <location>
        <begin position="242"/>
        <end position="244"/>
    </location>
</feature>
<feature type="short sequence motif" description="Lysosomal targeting motif. Required for AP1G1, AP2A2 and AP3D1 interaction" evidence="1">
    <location>
        <begin position="253"/>
        <end position="254"/>
    </location>
</feature>
<feature type="short sequence motif" description="Lysosomal targeting motif" evidence="1">
    <location>
        <begin position="409"/>
        <end position="419"/>
    </location>
</feature>
<feature type="modified residue" description="Phosphoserine" evidence="26">
    <location>
        <position position="14"/>
    </location>
</feature>
<feature type="modified residue" description="Cysteine methyl ester" evidence="1">
    <location>
        <position position="435"/>
    </location>
</feature>
<feature type="lipid moiety-binding region" description="S-farnesyl cysteine" evidence="1">
    <location>
        <position position="435"/>
    </location>
</feature>
<feature type="glycosylation site" description="N-linked (GlcNAc...) asparagine" evidence="2">
    <location>
        <position position="71"/>
    </location>
</feature>
<feature type="glycosylation site" description="N-linked (GlcNAc...) asparagine" evidence="2">
    <location>
        <position position="85"/>
    </location>
</feature>
<feature type="glycosylation site" description="N-linked (GlcNAc...) asparagine" evidence="2">
    <location>
        <position position="310"/>
    </location>
</feature>
<feature type="sequence conflict" description="In Ref. 1; AAC52957." evidence="24" ref="1">
    <original>P</original>
    <variation>R</variation>
    <location>
        <position position="79"/>
    </location>
</feature>
<feature type="sequence conflict" description="In Ref. 2; AAB07595." evidence="24" ref="2">
    <original>H</original>
    <variation>Y</variation>
    <location>
        <position position="120"/>
    </location>
</feature>
<feature type="sequence conflict" description="In Ref. 1; AAC52957." evidence="24" ref="1">
    <original>L</original>
    <variation>W</variation>
    <location>
        <position position="237"/>
    </location>
</feature>
<feature type="sequence conflict" description="In Ref. 1; AAC52957." evidence="24" ref="1">
    <original>QQ</original>
    <variation>HE</variation>
    <location>
        <begin position="317"/>
        <end position="318"/>
    </location>
</feature>
<feature type="sequence conflict" description="In Ref. 1; AAC52957." evidence="24" ref="1">
    <original>Y</original>
    <variation>H</variation>
    <location>
        <position position="380"/>
    </location>
</feature>
<name>CLN3_MOUSE</name>
<protein>
    <recommendedName>
        <fullName evidence="24">Battenin</fullName>
    </recommendedName>
    <alternativeName>
        <fullName>Protein CLN3</fullName>
    </alternativeName>
</protein>
<evidence type="ECO:0000250" key="1">
    <source>
        <dbReference type="UniProtKB" id="Q13286"/>
    </source>
</evidence>
<evidence type="ECO:0000255" key="2"/>
<evidence type="ECO:0000256" key="3">
    <source>
        <dbReference type="SAM" id="MobiDB-lite"/>
    </source>
</evidence>
<evidence type="ECO:0000269" key="4">
    <source>
    </source>
</evidence>
<evidence type="ECO:0000269" key="5">
    <source>
    </source>
</evidence>
<evidence type="ECO:0000269" key="6">
    <source>
    </source>
</evidence>
<evidence type="ECO:0000269" key="7">
    <source>
    </source>
</evidence>
<evidence type="ECO:0000269" key="8">
    <source>
    </source>
</evidence>
<evidence type="ECO:0000269" key="9">
    <source>
    </source>
</evidence>
<evidence type="ECO:0000269" key="10">
    <source>
    </source>
</evidence>
<evidence type="ECO:0000269" key="11">
    <source>
    </source>
</evidence>
<evidence type="ECO:0000269" key="12">
    <source>
    </source>
</evidence>
<evidence type="ECO:0000269" key="13">
    <source>
    </source>
</evidence>
<evidence type="ECO:0000269" key="14">
    <source>
    </source>
</evidence>
<evidence type="ECO:0000269" key="15">
    <source>
    </source>
</evidence>
<evidence type="ECO:0000269" key="16">
    <source>
    </source>
</evidence>
<evidence type="ECO:0000269" key="17">
    <source>
    </source>
</evidence>
<evidence type="ECO:0000269" key="18">
    <source>
    </source>
</evidence>
<evidence type="ECO:0000269" key="19">
    <source>
    </source>
</evidence>
<evidence type="ECO:0000269" key="20">
    <source>
    </source>
</evidence>
<evidence type="ECO:0000269" key="21">
    <source>
    </source>
</evidence>
<evidence type="ECO:0000269" key="22">
    <source>
    </source>
</evidence>
<evidence type="ECO:0000269" key="23">
    <source>
    </source>
</evidence>
<evidence type="ECO:0000305" key="24"/>
<evidence type="ECO:0000312" key="25">
    <source>
        <dbReference type="MGI" id="MGI:107537"/>
    </source>
</evidence>
<evidence type="ECO:0007744" key="26">
    <source>
    </source>
</evidence>
<accession>Q61124</accession>
<accession>O35934</accession>
<accession>P70400</accession>